<proteinExistence type="inferred from homology"/>
<keyword id="KW-0030">Aminoacyl-tRNA synthetase</keyword>
<keyword id="KW-0067">ATP-binding</keyword>
<keyword id="KW-0963">Cytoplasm</keyword>
<keyword id="KW-0436">Ligase</keyword>
<keyword id="KW-0547">Nucleotide-binding</keyword>
<keyword id="KW-0648">Protein biosynthesis</keyword>
<gene>
    <name evidence="1" type="primary">leuS</name>
    <name type="ordered locus">JJD26997_0632</name>
</gene>
<sequence>MAYEASLIEKKWQKIWDENEYFEPKDDLNLPKKYILSMFPYPSGRIHMGHVRNYTIGDALARYYRKIGFNVLHPIGFDSFGMPAENAAIKHKIHPKSWTYENIAYMKKELFSLGFSFSKKRMLATSDPLYTKFEQEIFIKMFEKGLIYTKEANVNWCEQDQTVLANEQVEDGKCWRCGHEVVQKKMPGYYVKITAYAEKLLKDLEGLRDKWPNQVLTMQENWIGKSEGLAFSLNLDEKSKQKAKESSLEVFTTRADTIYGVSYVALAPEHKIVQNLLLQNLLNQDVLNKIKAIQNQSPRERQSSEKEGYFLGIYAIHPLSGEKIPLWVANFVLSDYGSGAVMAVPAHDERDFEFAKKYNLAIKQVIQTQENLPYTQKLGKLIHSQEFDNLDCNEARLKIISQFEAKNIGKRVVNFKIRDWGVSRQRYWGAPIPMIKCQSCGIAPQKLENLPITLPEDVQITGEGNPLDKHPTWKNCICPKCGKEAQKESDTLDTFFESSWYFARFASDEKTWQEKALDEKSVKYWMSVDQYIGGIEHAILHLLYARFFQKALRDLGYLTQNEPFDRLLTQGMVLKDGAKMSKSKGNVVDPDEIIEKYGADTARLFMLFAAPPAKELEWNDDAVEGAYRFICKLYDRAQNIKKGELVELKQENLNKEEKYARLKVYEALKKSEEVYHQSFAFNTLIAACMEALNALALCKNEALEQEAFYIILNILEPIIPHVCFELSEELFKCKNFKKLELKEEVFVKDTLNLAVSINGKKRAEFKISSSASKEEILAFAKENTAKWLEGKSIVKEIYVEGKLVNLVIK</sequence>
<accession>A7H2R6</accession>
<name>SYL_CAMJD</name>
<feature type="chain" id="PRO_1000009317" description="Leucine--tRNA ligase">
    <location>
        <begin position="1"/>
        <end position="809"/>
    </location>
</feature>
<feature type="short sequence motif" description="'HIGH' region">
    <location>
        <begin position="40"/>
        <end position="50"/>
    </location>
</feature>
<feature type="short sequence motif" description="'KMSKS' region">
    <location>
        <begin position="579"/>
        <end position="583"/>
    </location>
</feature>
<feature type="binding site" evidence="1">
    <location>
        <position position="582"/>
    </location>
    <ligand>
        <name>ATP</name>
        <dbReference type="ChEBI" id="CHEBI:30616"/>
    </ligand>
</feature>
<evidence type="ECO:0000255" key="1">
    <source>
        <dbReference type="HAMAP-Rule" id="MF_00049"/>
    </source>
</evidence>
<organism>
    <name type="scientific">Campylobacter jejuni subsp. doylei (strain ATCC BAA-1458 / RM4099 / 269.97)</name>
    <dbReference type="NCBI Taxonomy" id="360109"/>
    <lineage>
        <taxon>Bacteria</taxon>
        <taxon>Pseudomonadati</taxon>
        <taxon>Campylobacterota</taxon>
        <taxon>Epsilonproteobacteria</taxon>
        <taxon>Campylobacterales</taxon>
        <taxon>Campylobacteraceae</taxon>
        <taxon>Campylobacter</taxon>
    </lineage>
</organism>
<protein>
    <recommendedName>
        <fullName evidence="1">Leucine--tRNA ligase</fullName>
        <ecNumber evidence="1">6.1.1.4</ecNumber>
    </recommendedName>
    <alternativeName>
        <fullName evidence="1">Leucyl-tRNA synthetase</fullName>
        <shortName evidence="1">LeuRS</shortName>
    </alternativeName>
</protein>
<reference key="1">
    <citation type="submission" date="2007-07" db="EMBL/GenBank/DDBJ databases">
        <title>Complete genome sequence of Campylobacter jejuni subsp doylei 269.97 isolated from human blood.</title>
        <authorList>
            <person name="Fouts D.E."/>
            <person name="Mongodin E.F."/>
            <person name="Puiu D."/>
            <person name="Sebastian Y."/>
            <person name="Miller W.G."/>
            <person name="Mandrell R.E."/>
            <person name="Lastovica A.J."/>
            <person name="Nelson K.E."/>
        </authorList>
    </citation>
    <scope>NUCLEOTIDE SEQUENCE [LARGE SCALE GENOMIC DNA]</scope>
    <source>
        <strain>ATCC BAA-1458 / RM4099 / 269.97</strain>
    </source>
</reference>
<dbReference type="EC" id="6.1.1.4" evidence="1"/>
<dbReference type="EMBL" id="CP000768">
    <property type="protein sequence ID" value="ABS43284.1"/>
    <property type="molecule type" value="Genomic_DNA"/>
</dbReference>
<dbReference type="SMR" id="A7H2R6"/>
<dbReference type="KEGG" id="cjd:JJD26997_0632"/>
<dbReference type="HOGENOM" id="CLU_004427_0_0_7"/>
<dbReference type="Proteomes" id="UP000002302">
    <property type="component" value="Chromosome"/>
</dbReference>
<dbReference type="GO" id="GO:0005829">
    <property type="term" value="C:cytosol"/>
    <property type="evidence" value="ECO:0007669"/>
    <property type="project" value="TreeGrafter"/>
</dbReference>
<dbReference type="GO" id="GO:0002161">
    <property type="term" value="F:aminoacyl-tRNA deacylase activity"/>
    <property type="evidence" value="ECO:0007669"/>
    <property type="project" value="InterPro"/>
</dbReference>
<dbReference type="GO" id="GO:0005524">
    <property type="term" value="F:ATP binding"/>
    <property type="evidence" value="ECO:0007669"/>
    <property type="project" value="UniProtKB-UniRule"/>
</dbReference>
<dbReference type="GO" id="GO:0004823">
    <property type="term" value="F:leucine-tRNA ligase activity"/>
    <property type="evidence" value="ECO:0007669"/>
    <property type="project" value="UniProtKB-UniRule"/>
</dbReference>
<dbReference type="GO" id="GO:0006429">
    <property type="term" value="P:leucyl-tRNA aminoacylation"/>
    <property type="evidence" value="ECO:0007669"/>
    <property type="project" value="UniProtKB-UniRule"/>
</dbReference>
<dbReference type="CDD" id="cd07958">
    <property type="entry name" value="Anticodon_Ia_Leu_BEm"/>
    <property type="match status" value="1"/>
</dbReference>
<dbReference type="CDD" id="cd00812">
    <property type="entry name" value="LeuRS_core"/>
    <property type="match status" value="1"/>
</dbReference>
<dbReference type="FunFam" id="1.10.730.10:FF:000002">
    <property type="entry name" value="Leucine--tRNA ligase"/>
    <property type="match status" value="1"/>
</dbReference>
<dbReference type="Gene3D" id="3.10.20.590">
    <property type="match status" value="1"/>
</dbReference>
<dbReference type="Gene3D" id="3.40.50.620">
    <property type="entry name" value="HUPs"/>
    <property type="match status" value="2"/>
</dbReference>
<dbReference type="Gene3D" id="1.10.730.10">
    <property type="entry name" value="Isoleucyl-tRNA Synthetase, Domain 1"/>
    <property type="match status" value="1"/>
</dbReference>
<dbReference type="HAMAP" id="MF_00049_B">
    <property type="entry name" value="Leu_tRNA_synth_B"/>
    <property type="match status" value="1"/>
</dbReference>
<dbReference type="InterPro" id="IPR001412">
    <property type="entry name" value="aa-tRNA-synth_I_CS"/>
</dbReference>
<dbReference type="InterPro" id="IPR002302">
    <property type="entry name" value="Leu-tRNA-ligase"/>
</dbReference>
<dbReference type="InterPro" id="IPR025709">
    <property type="entry name" value="Leu_tRNA-synth_edit"/>
</dbReference>
<dbReference type="InterPro" id="IPR013155">
    <property type="entry name" value="M/V/L/I-tRNA-synth_anticd-bd"/>
</dbReference>
<dbReference type="InterPro" id="IPR015413">
    <property type="entry name" value="Methionyl/Leucyl_tRNA_Synth"/>
</dbReference>
<dbReference type="InterPro" id="IPR014729">
    <property type="entry name" value="Rossmann-like_a/b/a_fold"/>
</dbReference>
<dbReference type="InterPro" id="IPR009080">
    <property type="entry name" value="tRNAsynth_Ia_anticodon-bd"/>
</dbReference>
<dbReference type="InterPro" id="IPR009008">
    <property type="entry name" value="Val/Leu/Ile-tRNA-synth_edit"/>
</dbReference>
<dbReference type="NCBIfam" id="TIGR00396">
    <property type="entry name" value="leuS_bact"/>
    <property type="match status" value="1"/>
</dbReference>
<dbReference type="PANTHER" id="PTHR43740:SF2">
    <property type="entry name" value="LEUCINE--TRNA LIGASE, MITOCHONDRIAL"/>
    <property type="match status" value="1"/>
</dbReference>
<dbReference type="PANTHER" id="PTHR43740">
    <property type="entry name" value="LEUCYL-TRNA SYNTHETASE"/>
    <property type="match status" value="1"/>
</dbReference>
<dbReference type="Pfam" id="PF08264">
    <property type="entry name" value="Anticodon_1"/>
    <property type="match status" value="1"/>
</dbReference>
<dbReference type="Pfam" id="PF13603">
    <property type="entry name" value="tRNA-synt_1_2"/>
    <property type="match status" value="1"/>
</dbReference>
<dbReference type="Pfam" id="PF09334">
    <property type="entry name" value="tRNA-synt_1g"/>
    <property type="match status" value="2"/>
</dbReference>
<dbReference type="PRINTS" id="PR00985">
    <property type="entry name" value="TRNASYNTHLEU"/>
</dbReference>
<dbReference type="SUPFAM" id="SSF47323">
    <property type="entry name" value="Anticodon-binding domain of a subclass of class I aminoacyl-tRNA synthetases"/>
    <property type="match status" value="1"/>
</dbReference>
<dbReference type="SUPFAM" id="SSF52374">
    <property type="entry name" value="Nucleotidylyl transferase"/>
    <property type="match status" value="1"/>
</dbReference>
<dbReference type="SUPFAM" id="SSF50677">
    <property type="entry name" value="ValRS/IleRS/LeuRS editing domain"/>
    <property type="match status" value="1"/>
</dbReference>
<dbReference type="PROSITE" id="PS00178">
    <property type="entry name" value="AA_TRNA_LIGASE_I"/>
    <property type="match status" value="1"/>
</dbReference>
<comment type="catalytic activity">
    <reaction evidence="1">
        <text>tRNA(Leu) + L-leucine + ATP = L-leucyl-tRNA(Leu) + AMP + diphosphate</text>
        <dbReference type="Rhea" id="RHEA:11688"/>
        <dbReference type="Rhea" id="RHEA-COMP:9613"/>
        <dbReference type="Rhea" id="RHEA-COMP:9622"/>
        <dbReference type="ChEBI" id="CHEBI:30616"/>
        <dbReference type="ChEBI" id="CHEBI:33019"/>
        <dbReference type="ChEBI" id="CHEBI:57427"/>
        <dbReference type="ChEBI" id="CHEBI:78442"/>
        <dbReference type="ChEBI" id="CHEBI:78494"/>
        <dbReference type="ChEBI" id="CHEBI:456215"/>
        <dbReference type="EC" id="6.1.1.4"/>
    </reaction>
</comment>
<comment type="subcellular location">
    <subcellularLocation>
        <location evidence="1">Cytoplasm</location>
    </subcellularLocation>
</comment>
<comment type="similarity">
    <text evidence="1">Belongs to the class-I aminoacyl-tRNA synthetase family.</text>
</comment>